<reference key="1">
    <citation type="journal article" date="2003" name="Mol. Microbiol.">
        <title>An integrated analysis of the genome of the hyperthermophilic archaeon Pyrococcus abyssi.</title>
        <authorList>
            <person name="Cohen G.N."/>
            <person name="Barbe V."/>
            <person name="Flament D."/>
            <person name="Galperin M."/>
            <person name="Heilig R."/>
            <person name="Lecompte O."/>
            <person name="Poch O."/>
            <person name="Prieur D."/>
            <person name="Querellou J."/>
            <person name="Ripp R."/>
            <person name="Thierry J.-C."/>
            <person name="Van der Oost J."/>
            <person name="Weissenbach J."/>
            <person name="Zivanovic Y."/>
            <person name="Forterre P."/>
        </authorList>
    </citation>
    <scope>NUCLEOTIDE SEQUENCE [LARGE SCALE GENOMIC DNA]</scope>
    <source>
        <strain>GE5 / Orsay</strain>
    </source>
</reference>
<reference key="2">
    <citation type="journal article" date="2012" name="Curr. Microbiol.">
        <title>Re-annotation of two hyperthermophilic archaea Pyrococcus abyssi GE5 and Pyrococcus furiosus DSM 3638.</title>
        <authorList>
            <person name="Gao J."/>
            <person name="Wang J."/>
        </authorList>
    </citation>
    <scope>GENOME REANNOTATION</scope>
    <source>
        <strain>GE5 / Orsay</strain>
    </source>
</reference>
<reference key="3">
    <citation type="journal article" date="2011" name="RNA">
        <title>Specificity shifts in the rRNA and tRNA nucleotide targets of archaeal and bacterial m5U methyltransferases.</title>
        <authorList>
            <person name="Auxilien S."/>
            <person name="Rasmussen A."/>
            <person name="Rose S."/>
            <person name="Brochier-Armanet C."/>
            <person name="Husson C."/>
            <person name="Fourmy D."/>
            <person name="Grosjean H."/>
            <person name="Douthwaite S."/>
        </authorList>
    </citation>
    <scope>FUNCTION</scope>
    <scope>CATALYTIC ACTIVITY</scope>
    <scope>ACTIVITY REGULATION</scope>
    <source>
        <strain>GE5 / Orsay</strain>
    </source>
</reference>
<name>ARLMC_PYRAB</name>
<gene>
    <name type="ordered locus">PYRAB11450</name>
    <name type="ORF">PAB0760</name>
</gene>
<organism>
    <name type="scientific">Pyrococcus abyssi (strain GE5 / Orsay)</name>
    <dbReference type="NCBI Taxonomy" id="272844"/>
    <lineage>
        <taxon>Archaea</taxon>
        <taxon>Methanobacteriati</taxon>
        <taxon>Methanobacteriota</taxon>
        <taxon>Thermococci</taxon>
        <taxon>Thermococcales</taxon>
        <taxon>Thermococcaceae</taxon>
        <taxon>Pyrococcus</taxon>
    </lineage>
</organism>
<comment type="function">
    <text evidence="3">Catalyzes the formation of 5-methyl-uridine at position equivalent to 747 (m5U747) in 23S rRNA (m5U859 in the P.abyssi numbering).</text>
</comment>
<comment type="catalytic activity">
    <reaction evidence="3">
        <text>uridine(747) in 23S rRNA + S-adenosyl-L-methionine = 5-methyluridine(747) in 23S rRNA + S-adenosyl-L-homocysteine + H(+)</text>
        <dbReference type="Rhea" id="RHEA:42628"/>
        <dbReference type="Rhea" id="RHEA-COMP:10154"/>
        <dbReference type="Rhea" id="RHEA-COMP:10155"/>
        <dbReference type="ChEBI" id="CHEBI:15378"/>
        <dbReference type="ChEBI" id="CHEBI:57856"/>
        <dbReference type="ChEBI" id="CHEBI:59789"/>
        <dbReference type="ChEBI" id="CHEBI:65315"/>
        <dbReference type="ChEBI" id="CHEBI:74447"/>
        <dbReference type="EC" id="2.1.1.189"/>
    </reaction>
</comment>
<comment type="activity regulation">
    <text evidence="3">Activated by magnesium ions.</text>
</comment>
<comment type="similarity">
    <text evidence="2">Belongs to the class I-like SAM-binding methyltransferase superfamily. RNA M5U methyltransferase family.</text>
</comment>
<proteinExistence type="evidence at protein level"/>
<keyword id="KW-0004">4Fe-4S</keyword>
<keyword id="KW-0408">Iron</keyword>
<keyword id="KW-0411">Iron-sulfur</keyword>
<keyword id="KW-0479">Metal-binding</keyword>
<keyword id="KW-0489">Methyltransferase</keyword>
<keyword id="KW-0698">rRNA processing</keyword>
<keyword id="KW-0949">S-adenosyl-L-methionine</keyword>
<keyword id="KW-0808">Transferase</keyword>
<sequence length="410" mass="46442">MRGIIKGVSNDGLGVLGEVLVPFAYPGDVVEVISTRERFGRTIARDFKLVKSSPIRVPGKCRYFGRCGGCLWQGLKYREQLKLKEEIFKRVTGVEAEIKGSPRIWFFRNISNFIVTVNGIGFKEFGMPRTVVSVDECPVFSERTKLYIRAMKRFLRETGLNPWNWKNGDVHYLQVREGKFTGEVMINVIAHIPPSGREELTEAFGFADSVYWSLKRDKRDDPKGIPTLIKGNEFIRESIEGLVYLIHPSTFFQTNSYALPILLKAVESFAEGSKVLDLYSGVGTFSLYLAKKGFEVTGVEVNEESVRVAKKSAEVNSLDVSFIPGRAEDAKLKGYETLIVDPPRKGLKDFSKRIAKEGPENLIYVSCNPSKFVLDYRNYLSKAYKIEDAVLIDMFPHTPHVEAVVKLRRR</sequence>
<feature type="chain" id="PRO_0000162054" description="23S rRNA (uracil(747)-C(5))-methyltransferase">
    <location>
        <begin position="1"/>
        <end position="410"/>
    </location>
</feature>
<feature type="active site" description="Nucleophile" evidence="2">
    <location>
        <position position="367"/>
    </location>
</feature>
<feature type="binding site" evidence="1">
    <location>
        <position position="61"/>
    </location>
    <ligand>
        <name>[4Fe-4S] cluster</name>
        <dbReference type="ChEBI" id="CHEBI:49883"/>
    </ligand>
</feature>
<feature type="binding site" evidence="1">
    <location>
        <position position="67"/>
    </location>
    <ligand>
        <name>[4Fe-4S] cluster</name>
        <dbReference type="ChEBI" id="CHEBI:49883"/>
    </ligand>
</feature>
<feature type="binding site" evidence="1">
    <location>
        <position position="70"/>
    </location>
    <ligand>
        <name>[4Fe-4S] cluster</name>
        <dbReference type="ChEBI" id="CHEBI:49883"/>
    </ligand>
</feature>
<feature type="binding site" evidence="1">
    <location>
        <position position="137"/>
    </location>
    <ligand>
        <name>[4Fe-4S] cluster</name>
        <dbReference type="ChEBI" id="CHEBI:49883"/>
    </ligand>
</feature>
<feature type="binding site" evidence="2">
    <location>
        <position position="253"/>
    </location>
    <ligand>
        <name>S-adenosyl-L-methionine</name>
        <dbReference type="ChEBI" id="CHEBI:59789"/>
    </ligand>
</feature>
<feature type="binding site" evidence="2">
    <location>
        <position position="279"/>
    </location>
    <ligand>
        <name>S-adenosyl-L-methionine</name>
        <dbReference type="ChEBI" id="CHEBI:59789"/>
    </ligand>
</feature>
<feature type="binding site" evidence="2">
    <location>
        <position position="300"/>
    </location>
    <ligand>
        <name>S-adenosyl-L-methionine</name>
        <dbReference type="ChEBI" id="CHEBI:59789"/>
    </ligand>
</feature>
<feature type="binding site" evidence="2">
    <location>
        <position position="341"/>
    </location>
    <ligand>
        <name>S-adenosyl-L-methionine</name>
        <dbReference type="ChEBI" id="CHEBI:59789"/>
    </ligand>
</feature>
<accession>Q9UZK1</accession>
<accession>G8ZKB9</accession>
<protein>
    <recommendedName>
        <fullName>23S rRNA (uracil(747)-C(5))-methyltransferase</fullName>
        <ecNumber>2.1.1.189</ecNumber>
    </recommendedName>
    <alternativeName>
        <fullName>23S rRNA(m5U747)-methyltransferase</fullName>
    </alternativeName>
</protein>
<evidence type="ECO:0000250" key="1"/>
<evidence type="ECO:0000255" key="2">
    <source>
        <dbReference type="PROSITE-ProRule" id="PRU01024"/>
    </source>
</evidence>
<evidence type="ECO:0000269" key="3">
    <source>
    </source>
</evidence>
<dbReference type="EC" id="2.1.1.189"/>
<dbReference type="EMBL" id="AJ248286">
    <property type="protein sequence ID" value="CAB50056.1"/>
    <property type="molecule type" value="Genomic_DNA"/>
</dbReference>
<dbReference type="EMBL" id="HE613800">
    <property type="protein sequence ID" value="CCE70562.1"/>
    <property type="molecule type" value="Genomic_DNA"/>
</dbReference>
<dbReference type="PIR" id="C75094">
    <property type="entry name" value="C75094"/>
</dbReference>
<dbReference type="RefSeq" id="WP_010868262.1">
    <property type="nucleotide sequence ID" value="NC_000868.1"/>
</dbReference>
<dbReference type="SMR" id="Q9UZK1"/>
<dbReference type="STRING" id="272844.PAB0760"/>
<dbReference type="KEGG" id="pab:PAB0760"/>
<dbReference type="PATRIC" id="fig|272844.11.peg.1203"/>
<dbReference type="eggNOG" id="arCOG00122">
    <property type="taxonomic scope" value="Archaea"/>
</dbReference>
<dbReference type="HOGENOM" id="CLU_014689_8_1_2"/>
<dbReference type="OrthoDB" id="85343at2157"/>
<dbReference type="PhylomeDB" id="Q9UZK1"/>
<dbReference type="Proteomes" id="UP000000810">
    <property type="component" value="Chromosome"/>
</dbReference>
<dbReference type="Proteomes" id="UP000009139">
    <property type="component" value="Chromosome"/>
</dbReference>
<dbReference type="GO" id="GO:0051539">
    <property type="term" value="F:4 iron, 4 sulfur cluster binding"/>
    <property type="evidence" value="ECO:0007669"/>
    <property type="project" value="UniProtKB-KW"/>
</dbReference>
<dbReference type="GO" id="GO:0046872">
    <property type="term" value="F:metal ion binding"/>
    <property type="evidence" value="ECO:0007669"/>
    <property type="project" value="UniProtKB-KW"/>
</dbReference>
<dbReference type="GO" id="GO:0070041">
    <property type="term" value="F:rRNA (uridine-C5-)-methyltransferase activity"/>
    <property type="evidence" value="ECO:0000314"/>
    <property type="project" value="UniProtKB"/>
</dbReference>
<dbReference type="GO" id="GO:0031167">
    <property type="term" value="P:rRNA methylation"/>
    <property type="evidence" value="ECO:0000314"/>
    <property type="project" value="UniProtKB"/>
</dbReference>
<dbReference type="CDD" id="cd02440">
    <property type="entry name" value="AdoMet_MTases"/>
    <property type="match status" value="1"/>
</dbReference>
<dbReference type="Gene3D" id="2.40.50.1070">
    <property type="match status" value="1"/>
</dbReference>
<dbReference type="Gene3D" id="2.40.50.140">
    <property type="entry name" value="Nucleic acid-binding proteins"/>
    <property type="match status" value="1"/>
</dbReference>
<dbReference type="Gene3D" id="3.40.50.150">
    <property type="entry name" value="Vaccinia Virus protein VP39"/>
    <property type="match status" value="1"/>
</dbReference>
<dbReference type="InterPro" id="IPR030390">
    <property type="entry name" value="MeTrfase_TrmA_AS"/>
</dbReference>
<dbReference type="InterPro" id="IPR030391">
    <property type="entry name" value="MeTrfase_TrmA_CS"/>
</dbReference>
<dbReference type="InterPro" id="IPR012340">
    <property type="entry name" value="NA-bd_OB-fold"/>
</dbReference>
<dbReference type="InterPro" id="IPR048845">
    <property type="entry name" value="RUMT_ARLMC_TRAM_dom"/>
</dbReference>
<dbReference type="InterPro" id="IPR029063">
    <property type="entry name" value="SAM-dependent_MTases_sf"/>
</dbReference>
<dbReference type="InterPro" id="IPR015985">
    <property type="entry name" value="TehB-like_dom"/>
</dbReference>
<dbReference type="InterPro" id="IPR010280">
    <property type="entry name" value="U5_MeTrfase_fam"/>
</dbReference>
<dbReference type="NCBIfam" id="TIGR00479">
    <property type="entry name" value="rumA"/>
    <property type="match status" value="1"/>
</dbReference>
<dbReference type="PANTHER" id="PTHR11061">
    <property type="entry name" value="RNA M5U METHYLTRANSFERASE"/>
    <property type="match status" value="1"/>
</dbReference>
<dbReference type="PANTHER" id="PTHR11061:SF30">
    <property type="entry name" value="TRNA (URACIL(54)-C(5))-METHYLTRANSFERASE"/>
    <property type="match status" value="1"/>
</dbReference>
<dbReference type="Pfam" id="PF21579">
    <property type="entry name" value="PabTrmU54_TRAM_dom"/>
    <property type="match status" value="1"/>
</dbReference>
<dbReference type="Pfam" id="PF03848">
    <property type="entry name" value="TehB"/>
    <property type="match status" value="1"/>
</dbReference>
<dbReference type="Pfam" id="PF05958">
    <property type="entry name" value="tRNA_U5-meth_tr"/>
    <property type="match status" value="1"/>
</dbReference>
<dbReference type="SUPFAM" id="SSF53335">
    <property type="entry name" value="S-adenosyl-L-methionine-dependent methyltransferases"/>
    <property type="match status" value="1"/>
</dbReference>
<dbReference type="PROSITE" id="PS51687">
    <property type="entry name" value="SAM_MT_RNA_M5U"/>
    <property type="match status" value="1"/>
</dbReference>
<dbReference type="PROSITE" id="PS01230">
    <property type="entry name" value="TRMA_1"/>
    <property type="match status" value="1"/>
</dbReference>
<dbReference type="PROSITE" id="PS01231">
    <property type="entry name" value="TRMA_2"/>
    <property type="match status" value="1"/>
</dbReference>